<gene>
    <name evidence="1" type="primary">pth</name>
    <name type="ordered locus">LJ_0276</name>
</gene>
<comment type="function">
    <text evidence="1">Hydrolyzes ribosome-free peptidyl-tRNAs (with 1 or more amino acids incorporated), which drop off the ribosome during protein synthesis, or as a result of ribosome stalling.</text>
</comment>
<comment type="function">
    <text evidence="1">Catalyzes the release of premature peptidyl moieties from peptidyl-tRNA molecules trapped in stalled 50S ribosomal subunits, and thus maintains levels of free tRNAs and 50S ribosomes.</text>
</comment>
<comment type="catalytic activity">
    <reaction evidence="1">
        <text>an N-acyl-L-alpha-aminoacyl-tRNA + H2O = an N-acyl-L-amino acid + a tRNA + H(+)</text>
        <dbReference type="Rhea" id="RHEA:54448"/>
        <dbReference type="Rhea" id="RHEA-COMP:10123"/>
        <dbReference type="Rhea" id="RHEA-COMP:13883"/>
        <dbReference type="ChEBI" id="CHEBI:15377"/>
        <dbReference type="ChEBI" id="CHEBI:15378"/>
        <dbReference type="ChEBI" id="CHEBI:59874"/>
        <dbReference type="ChEBI" id="CHEBI:78442"/>
        <dbReference type="ChEBI" id="CHEBI:138191"/>
        <dbReference type="EC" id="3.1.1.29"/>
    </reaction>
</comment>
<comment type="subunit">
    <text evidence="1">Monomer.</text>
</comment>
<comment type="subcellular location">
    <subcellularLocation>
        <location evidence="1">Cytoplasm</location>
    </subcellularLocation>
</comment>
<comment type="similarity">
    <text evidence="1">Belongs to the PTH family.</text>
</comment>
<name>PTH_LACJO</name>
<feature type="chain" id="PRO_0000187753" description="Peptidyl-tRNA hydrolase">
    <location>
        <begin position="1"/>
        <end position="185"/>
    </location>
</feature>
<feature type="active site" description="Proton acceptor" evidence="1">
    <location>
        <position position="19"/>
    </location>
</feature>
<feature type="binding site" evidence="1">
    <location>
        <position position="14"/>
    </location>
    <ligand>
        <name>tRNA</name>
        <dbReference type="ChEBI" id="CHEBI:17843"/>
    </ligand>
</feature>
<feature type="binding site" evidence="1">
    <location>
        <position position="64"/>
    </location>
    <ligand>
        <name>tRNA</name>
        <dbReference type="ChEBI" id="CHEBI:17843"/>
    </ligand>
</feature>
<feature type="binding site" evidence="1">
    <location>
        <position position="66"/>
    </location>
    <ligand>
        <name>tRNA</name>
        <dbReference type="ChEBI" id="CHEBI:17843"/>
    </ligand>
</feature>
<feature type="binding site" evidence="1">
    <location>
        <position position="112"/>
    </location>
    <ligand>
        <name>tRNA</name>
        <dbReference type="ChEBI" id="CHEBI:17843"/>
    </ligand>
</feature>
<feature type="site" description="Discriminates between blocked and unblocked aminoacyl-tRNA" evidence="1">
    <location>
        <position position="9"/>
    </location>
</feature>
<feature type="site" description="Stabilizes the basic form of H active site to accept a proton" evidence="1">
    <location>
        <position position="91"/>
    </location>
</feature>
<protein>
    <recommendedName>
        <fullName evidence="1">Peptidyl-tRNA hydrolase</fullName>
        <shortName evidence="1">Pth</shortName>
        <ecNumber evidence="1">3.1.1.29</ecNumber>
    </recommendedName>
</protein>
<reference key="1">
    <citation type="journal article" date="2004" name="Proc. Natl. Acad. Sci. U.S.A.">
        <title>The genome sequence of the probiotic intestinal bacterium Lactobacillus johnsonii NCC 533.</title>
        <authorList>
            <person name="Pridmore R.D."/>
            <person name="Berger B."/>
            <person name="Desiere F."/>
            <person name="Vilanova D."/>
            <person name="Barretto C."/>
            <person name="Pittet A.-C."/>
            <person name="Zwahlen M.-C."/>
            <person name="Rouvet M."/>
            <person name="Altermann E."/>
            <person name="Barrangou R."/>
            <person name="Mollet B."/>
            <person name="Mercenier A."/>
            <person name="Klaenhammer T."/>
            <person name="Arigoni F."/>
            <person name="Schell M.A."/>
        </authorList>
    </citation>
    <scope>NUCLEOTIDE SEQUENCE [LARGE SCALE GENOMIC DNA]</scope>
    <source>
        <strain>CNCM I-1225 / La1 / NCC 533</strain>
    </source>
</reference>
<organism>
    <name type="scientific">Lactobacillus johnsonii (strain CNCM I-12250 / La1 / NCC 533)</name>
    <dbReference type="NCBI Taxonomy" id="257314"/>
    <lineage>
        <taxon>Bacteria</taxon>
        <taxon>Bacillati</taxon>
        <taxon>Bacillota</taxon>
        <taxon>Bacilli</taxon>
        <taxon>Lactobacillales</taxon>
        <taxon>Lactobacillaceae</taxon>
        <taxon>Lactobacillus</taxon>
    </lineage>
</organism>
<keyword id="KW-0963">Cytoplasm</keyword>
<keyword id="KW-0378">Hydrolase</keyword>
<keyword id="KW-0694">RNA-binding</keyword>
<keyword id="KW-0820">tRNA-binding</keyword>
<dbReference type="EC" id="3.1.1.29" evidence="1"/>
<dbReference type="EMBL" id="AE017198">
    <property type="protein sequence ID" value="AAS08259.1"/>
    <property type="molecule type" value="Genomic_DNA"/>
</dbReference>
<dbReference type="RefSeq" id="WP_011161462.1">
    <property type="nucleotide sequence ID" value="NC_005362.1"/>
</dbReference>
<dbReference type="SMR" id="Q74LA8"/>
<dbReference type="KEGG" id="ljo:LJ_0276"/>
<dbReference type="PATRIC" id="fig|257314.6.peg.288"/>
<dbReference type="eggNOG" id="COG0193">
    <property type="taxonomic scope" value="Bacteria"/>
</dbReference>
<dbReference type="HOGENOM" id="CLU_062456_4_1_9"/>
<dbReference type="Proteomes" id="UP000000581">
    <property type="component" value="Chromosome"/>
</dbReference>
<dbReference type="GO" id="GO:0005737">
    <property type="term" value="C:cytoplasm"/>
    <property type="evidence" value="ECO:0007669"/>
    <property type="project" value="UniProtKB-SubCell"/>
</dbReference>
<dbReference type="GO" id="GO:0004045">
    <property type="term" value="F:peptidyl-tRNA hydrolase activity"/>
    <property type="evidence" value="ECO:0007669"/>
    <property type="project" value="UniProtKB-UniRule"/>
</dbReference>
<dbReference type="GO" id="GO:0000049">
    <property type="term" value="F:tRNA binding"/>
    <property type="evidence" value="ECO:0007669"/>
    <property type="project" value="UniProtKB-UniRule"/>
</dbReference>
<dbReference type="GO" id="GO:0006515">
    <property type="term" value="P:protein quality control for misfolded or incompletely synthesized proteins"/>
    <property type="evidence" value="ECO:0007669"/>
    <property type="project" value="UniProtKB-UniRule"/>
</dbReference>
<dbReference type="GO" id="GO:0072344">
    <property type="term" value="P:rescue of stalled ribosome"/>
    <property type="evidence" value="ECO:0007669"/>
    <property type="project" value="UniProtKB-UniRule"/>
</dbReference>
<dbReference type="CDD" id="cd00462">
    <property type="entry name" value="PTH"/>
    <property type="match status" value="1"/>
</dbReference>
<dbReference type="FunFam" id="3.40.50.1470:FF:000001">
    <property type="entry name" value="Peptidyl-tRNA hydrolase"/>
    <property type="match status" value="1"/>
</dbReference>
<dbReference type="Gene3D" id="3.40.50.1470">
    <property type="entry name" value="Peptidyl-tRNA hydrolase"/>
    <property type="match status" value="1"/>
</dbReference>
<dbReference type="HAMAP" id="MF_00083">
    <property type="entry name" value="Pept_tRNA_hydro_bact"/>
    <property type="match status" value="1"/>
</dbReference>
<dbReference type="InterPro" id="IPR001328">
    <property type="entry name" value="Pept_tRNA_hydro"/>
</dbReference>
<dbReference type="InterPro" id="IPR018171">
    <property type="entry name" value="Pept_tRNA_hydro_CS"/>
</dbReference>
<dbReference type="InterPro" id="IPR036416">
    <property type="entry name" value="Pept_tRNA_hydro_sf"/>
</dbReference>
<dbReference type="NCBIfam" id="TIGR00447">
    <property type="entry name" value="pth"/>
    <property type="match status" value="1"/>
</dbReference>
<dbReference type="PANTHER" id="PTHR17224">
    <property type="entry name" value="PEPTIDYL-TRNA HYDROLASE"/>
    <property type="match status" value="1"/>
</dbReference>
<dbReference type="PANTHER" id="PTHR17224:SF1">
    <property type="entry name" value="PEPTIDYL-TRNA HYDROLASE"/>
    <property type="match status" value="1"/>
</dbReference>
<dbReference type="Pfam" id="PF01195">
    <property type="entry name" value="Pept_tRNA_hydro"/>
    <property type="match status" value="1"/>
</dbReference>
<dbReference type="SUPFAM" id="SSF53178">
    <property type="entry name" value="Peptidyl-tRNA hydrolase-like"/>
    <property type="match status" value="1"/>
</dbReference>
<dbReference type="PROSITE" id="PS01195">
    <property type="entry name" value="PEPT_TRNA_HYDROL_1"/>
    <property type="match status" value="1"/>
</dbReference>
<evidence type="ECO:0000255" key="1">
    <source>
        <dbReference type="HAMAP-Rule" id="MF_00083"/>
    </source>
</evidence>
<sequence length="185" mass="20950">MKLITGLGNPGRKYDQTKHNTGFMALDHYLEKNGLTLDKNKFEGLWTKQKINGEDVIFLEPQTFMNDSGKSIAQVANFFKIKPEDILVIHDDMDMPIGKIRIRANGKSGGHNGIKSIMACLGTNNFNRLKIGIRHPENESVVSWVLSPFNNDQQKLMDAAFETSENVINDFIKGKNAQYLMNQYN</sequence>
<proteinExistence type="inferred from homology"/>
<accession>Q74LA8</accession>